<evidence type="ECO:0000255" key="1">
    <source>
        <dbReference type="HAMAP-Rule" id="MF_00225"/>
    </source>
</evidence>
<dbReference type="EC" id="1.3.5.2" evidence="1"/>
<dbReference type="EMBL" id="CR954246">
    <property type="protein sequence ID" value="CAI86742.1"/>
    <property type="molecule type" value="Genomic_DNA"/>
</dbReference>
<dbReference type="SMR" id="Q3IGZ1"/>
<dbReference type="STRING" id="326442.PSHAa1669"/>
<dbReference type="KEGG" id="pha:PSHAa1669"/>
<dbReference type="PATRIC" id="fig|326442.8.peg.1614"/>
<dbReference type="eggNOG" id="COG0167">
    <property type="taxonomic scope" value="Bacteria"/>
</dbReference>
<dbReference type="HOGENOM" id="CLU_013640_2_0_6"/>
<dbReference type="BioCyc" id="PHAL326442:PSHA_RS08180-MONOMER"/>
<dbReference type="UniPathway" id="UPA00070">
    <property type="reaction ID" value="UER00946"/>
</dbReference>
<dbReference type="Proteomes" id="UP000006843">
    <property type="component" value="Chromosome I"/>
</dbReference>
<dbReference type="GO" id="GO:0005737">
    <property type="term" value="C:cytoplasm"/>
    <property type="evidence" value="ECO:0007669"/>
    <property type="project" value="InterPro"/>
</dbReference>
<dbReference type="GO" id="GO:0005886">
    <property type="term" value="C:plasma membrane"/>
    <property type="evidence" value="ECO:0007669"/>
    <property type="project" value="UniProtKB-SubCell"/>
</dbReference>
<dbReference type="GO" id="GO:0106430">
    <property type="term" value="F:dihydroorotate dehydrogenase (quinone) activity"/>
    <property type="evidence" value="ECO:0007669"/>
    <property type="project" value="UniProtKB-EC"/>
</dbReference>
<dbReference type="GO" id="GO:0006207">
    <property type="term" value="P:'de novo' pyrimidine nucleobase biosynthetic process"/>
    <property type="evidence" value="ECO:0007669"/>
    <property type="project" value="InterPro"/>
</dbReference>
<dbReference type="GO" id="GO:0044205">
    <property type="term" value="P:'de novo' UMP biosynthetic process"/>
    <property type="evidence" value="ECO:0007669"/>
    <property type="project" value="UniProtKB-UniRule"/>
</dbReference>
<dbReference type="CDD" id="cd04738">
    <property type="entry name" value="DHOD_2_like"/>
    <property type="match status" value="1"/>
</dbReference>
<dbReference type="FunFam" id="3.20.20.70:FF:000028">
    <property type="entry name" value="Dihydroorotate dehydrogenase (quinone)"/>
    <property type="match status" value="1"/>
</dbReference>
<dbReference type="Gene3D" id="3.20.20.70">
    <property type="entry name" value="Aldolase class I"/>
    <property type="match status" value="1"/>
</dbReference>
<dbReference type="HAMAP" id="MF_00225">
    <property type="entry name" value="DHO_dh_type2"/>
    <property type="match status" value="1"/>
</dbReference>
<dbReference type="InterPro" id="IPR013785">
    <property type="entry name" value="Aldolase_TIM"/>
</dbReference>
<dbReference type="InterPro" id="IPR050074">
    <property type="entry name" value="DHO_dehydrogenase"/>
</dbReference>
<dbReference type="InterPro" id="IPR012135">
    <property type="entry name" value="Dihydroorotate_DH_1_2"/>
</dbReference>
<dbReference type="InterPro" id="IPR005719">
    <property type="entry name" value="Dihydroorotate_DH_2"/>
</dbReference>
<dbReference type="InterPro" id="IPR005720">
    <property type="entry name" value="Dihydroorotate_DH_cat"/>
</dbReference>
<dbReference type="InterPro" id="IPR001295">
    <property type="entry name" value="Dihydroorotate_DH_CS"/>
</dbReference>
<dbReference type="NCBIfam" id="NF003644">
    <property type="entry name" value="PRK05286.1-1"/>
    <property type="match status" value="1"/>
</dbReference>
<dbReference type="NCBIfam" id="NF003645">
    <property type="entry name" value="PRK05286.1-2"/>
    <property type="match status" value="1"/>
</dbReference>
<dbReference type="NCBIfam" id="NF003646">
    <property type="entry name" value="PRK05286.1-4"/>
    <property type="match status" value="1"/>
</dbReference>
<dbReference type="NCBIfam" id="NF003652">
    <property type="entry name" value="PRK05286.2-5"/>
    <property type="match status" value="1"/>
</dbReference>
<dbReference type="NCBIfam" id="TIGR01036">
    <property type="entry name" value="pyrD_sub2"/>
    <property type="match status" value="1"/>
</dbReference>
<dbReference type="PANTHER" id="PTHR48109:SF4">
    <property type="entry name" value="DIHYDROOROTATE DEHYDROGENASE (QUINONE), MITOCHONDRIAL"/>
    <property type="match status" value="1"/>
</dbReference>
<dbReference type="PANTHER" id="PTHR48109">
    <property type="entry name" value="DIHYDROOROTATE DEHYDROGENASE (QUINONE), MITOCHONDRIAL-RELATED"/>
    <property type="match status" value="1"/>
</dbReference>
<dbReference type="Pfam" id="PF01180">
    <property type="entry name" value="DHO_dh"/>
    <property type="match status" value="1"/>
</dbReference>
<dbReference type="PIRSF" id="PIRSF000164">
    <property type="entry name" value="DHO_oxidase"/>
    <property type="match status" value="1"/>
</dbReference>
<dbReference type="SUPFAM" id="SSF51395">
    <property type="entry name" value="FMN-linked oxidoreductases"/>
    <property type="match status" value="1"/>
</dbReference>
<dbReference type="PROSITE" id="PS00911">
    <property type="entry name" value="DHODEHASE_1"/>
    <property type="match status" value="1"/>
</dbReference>
<dbReference type="PROSITE" id="PS00912">
    <property type="entry name" value="DHODEHASE_2"/>
    <property type="match status" value="1"/>
</dbReference>
<name>PYRD_PSET1</name>
<protein>
    <recommendedName>
        <fullName evidence="1">Dihydroorotate dehydrogenase (quinone)</fullName>
        <ecNumber evidence="1">1.3.5.2</ecNumber>
    </recommendedName>
    <alternativeName>
        <fullName evidence="1">DHOdehase</fullName>
        <shortName evidence="1">DHOD</shortName>
        <shortName evidence="1">DHODase</shortName>
    </alternativeName>
    <alternativeName>
        <fullName evidence="1">Dihydroorotate oxidase</fullName>
    </alternativeName>
</protein>
<sequence>MFYDLARRFMFTRDAEWAHEFALNNLSRFANTPLSAAWSQNIVNKPVNFLGLELKNPVGLAAGLDKNAECITAFAQMGFGFVEVGTVTPRPQAGNDKPRMFRLPQSNAIINRMGFNNKGVDNLVNNVKAANYTGILGINIGKNKDTPNEQGKDDYIHCMRKVFEHASYITVNISSPNTPGLRDLQYGAALDDLLQSLKNEQLDLVAKHGKQVPMLVKIAPDLDPIQIAQVSESLLSNKIDGVIATNTTLERSMVAGQQYADEAGGLSGQPVRERATHVVSELKRLTNGQLPIIGVGGIDDVSSAKEKINAGADLVQIYTGFIYKGPQLIKSIVDSL</sequence>
<accession>Q3IGZ1</accession>
<keyword id="KW-1003">Cell membrane</keyword>
<keyword id="KW-0285">Flavoprotein</keyword>
<keyword id="KW-0288">FMN</keyword>
<keyword id="KW-0472">Membrane</keyword>
<keyword id="KW-0560">Oxidoreductase</keyword>
<keyword id="KW-0665">Pyrimidine biosynthesis</keyword>
<keyword id="KW-1185">Reference proteome</keyword>
<organism>
    <name type="scientific">Pseudoalteromonas translucida (strain TAC 125)</name>
    <dbReference type="NCBI Taxonomy" id="326442"/>
    <lineage>
        <taxon>Bacteria</taxon>
        <taxon>Pseudomonadati</taxon>
        <taxon>Pseudomonadota</taxon>
        <taxon>Gammaproteobacteria</taxon>
        <taxon>Alteromonadales</taxon>
        <taxon>Pseudoalteromonadaceae</taxon>
        <taxon>Pseudoalteromonas</taxon>
    </lineage>
</organism>
<gene>
    <name evidence="1" type="primary">pyrD</name>
    <name type="ordered locus">PSHAa1669</name>
</gene>
<reference key="1">
    <citation type="journal article" date="2005" name="Genome Res.">
        <title>Coping with cold: the genome of the versatile marine Antarctica bacterium Pseudoalteromonas haloplanktis TAC125.</title>
        <authorList>
            <person name="Medigue C."/>
            <person name="Krin E."/>
            <person name="Pascal G."/>
            <person name="Barbe V."/>
            <person name="Bernsel A."/>
            <person name="Bertin P.N."/>
            <person name="Cheung F."/>
            <person name="Cruveiller S."/>
            <person name="D'Amico S."/>
            <person name="Duilio A."/>
            <person name="Fang G."/>
            <person name="Feller G."/>
            <person name="Ho C."/>
            <person name="Mangenot S."/>
            <person name="Marino G."/>
            <person name="Nilsson J."/>
            <person name="Parrilli E."/>
            <person name="Rocha E.P.C."/>
            <person name="Rouy Z."/>
            <person name="Sekowska A."/>
            <person name="Tutino M.L."/>
            <person name="Vallenet D."/>
            <person name="von Heijne G."/>
            <person name="Danchin A."/>
        </authorList>
    </citation>
    <scope>NUCLEOTIDE SEQUENCE [LARGE SCALE GENOMIC DNA]</scope>
    <source>
        <strain>TAC 125</strain>
    </source>
</reference>
<comment type="function">
    <text evidence="1">Catalyzes the conversion of dihydroorotate to orotate with quinone as electron acceptor.</text>
</comment>
<comment type="catalytic activity">
    <reaction evidence="1">
        <text>(S)-dihydroorotate + a quinone = orotate + a quinol</text>
        <dbReference type="Rhea" id="RHEA:30187"/>
        <dbReference type="ChEBI" id="CHEBI:24646"/>
        <dbReference type="ChEBI" id="CHEBI:30839"/>
        <dbReference type="ChEBI" id="CHEBI:30864"/>
        <dbReference type="ChEBI" id="CHEBI:132124"/>
        <dbReference type="EC" id="1.3.5.2"/>
    </reaction>
</comment>
<comment type="cofactor">
    <cofactor evidence="1">
        <name>FMN</name>
        <dbReference type="ChEBI" id="CHEBI:58210"/>
    </cofactor>
    <text evidence="1">Binds 1 FMN per subunit.</text>
</comment>
<comment type="pathway">
    <text evidence="1">Pyrimidine metabolism; UMP biosynthesis via de novo pathway; orotate from (S)-dihydroorotate (quinone route): step 1/1.</text>
</comment>
<comment type="subunit">
    <text evidence="1">Monomer.</text>
</comment>
<comment type="subcellular location">
    <subcellularLocation>
        <location evidence="1">Cell membrane</location>
        <topology evidence="1">Peripheral membrane protein</topology>
    </subcellularLocation>
</comment>
<comment type="similarity">
    <text evidence="1">Belongs to the dihydroorotate dehydrogenase family. Type 2 subfamily.</text>
</comment>
<feature type="chain" id="PRO_1000024202" description="Dihydroorotate dehydrogenase (quinone)">
    <location>
        <begin position="1"/>
        <end position="336"/>
    </location>
</feature>
<feature type="active site" description="Nucleophile" evidence="1">
    <location>
        <position position="175"/>
    </location>
</feature>
<feature type="binding site" evidence="1">
    <location>
        <begin position="62"/>
        <end position="66"/>
    </location>
    <ligand>
        <name>FMN</name>
        <dbReference type="ChEBI" id="CHEBI:58210"/>
    </ligand>
</feature>
<feature type="binding site" evidence="1">
    <location>
        <position position="66"/>
    </location>
    <ligand>
        <name>substrate</name>
    </ligand>
</feature>
<feature type="binding site" evidence="1">
    <location>
        <position position="86"/>
    </location>
    <ligand>
        <name>FMN</name>
        <dbReference type="ChEBI" id="CHEBI:58210"/>
    </ligand>
</feature>
<feature type="binding site" evidence="1">
    <location>
        <begin position="111"/>
        <end position="115"/>
    </location>
    <ligand>
        <name>substrate</name>
    </ligand>
</feature>
<feature type="binding site" evidence="1">
    <location>
        <position position="139"/>
    </location>
    <ligand>
        <name>FMN</name>
        <dbReference type="ChEBI" id="CHEBI:58210"/>
    </ligand>
</feature>
<feature type="binding site" evidence="1">
    <location>
        <position position="172"/>
    </location>
    <ligand>
        <name>FMN</name>
        <dbReference type="ChEBI" id="CHEBI:58210"/>
    </ligand>
</feature>
<feature type="binding site" evidence="1">
    <location>
        <position position="172"/>
    </location>
    <ligand>
        <name>substrate</name>
    </ligand>
</feature>
<feature type="binding site" evidence="1">
    <location>
        <position position="177"/>
    </location>
    <ligand>
        <name>substrate</name>
    </ligand>
</feature>
<feature type="binding site" evidence="1">
    <location>
        <position position="217"/>
    </location>
    <ligand>
        <name>FMN</name>
        <dbReference type="ChEBI" id="CHEBI:58210"/>
    </ligand>
</feature>
<feature type="binding site" evidence="1">
    <location>
        <position position="245"/>
    </location>
    <ligand>
        <name>FMN</name>
        <dbReference type="ChEBI" id="CHEBI:58210"/>
    </ligand>
</feature>
<feature type="binding site" evidence="1">
    <location>
        <begin position="246"/>
        <end position="247"/>
    </location>
    <ligand>
        <name>substrate</name>
    </ligand>
</feature>
<feature type="binding site" evidence="1">
    <location>
        <position position="268"/>
    </location>
    <ligand>
        <name>FMN</name>
        <dbReference type="ChEBI" id="CHEBI:58210"/>
    </ligand>
</feature>
<feature type="binding site" evidence="1">
    <location>
        <position position="297"/>
    </location>
    <ligand>
        <name>FMN</name>
        <dbReference type="ChEBI" id="CHEBI:58210"/>
    </ligand>
</feature>
<feature type="binding site" evidence="1">
    <location>
        <begin position="318"/>
        <end position="319"/>
    </location>
    <ligand>
        <name>FMN</name>
        <dbReference type="ChEBI" id="CHEBI:58210"/>
    </ligand>
</feature>
<proteinExistence type="inferred from homology"/>